<accession>Q2V4D7</accession>
<organism>
    <name type="scientific">Arabidopsis thaliana</name>
    <name type="common">Mouse-ear cress</name>
    <dbReference type="NCBI Taxonomy" id="3702"/>
    <lineage>
        <taxon>Eukaryota</taxon>
        <taxon>Viridiplantae</taxon>
        <taxon>Streptophyta</taxon>
        <taxon>Embryophyta</taxon>
        <taxon>Tracheophyta</taxon>
        <taxon>Spermatophyta</taxon>
        <taxon>Magnoliopsida</taxon>
        <taxon>eudicotyledons</taxon>
        <taxon>Gunneridae</taxon>
        <taxon>Pentapetalae</taxon>
        <taxon>rosids</taxon>
        <taxon>malvids</taxon>
        <taxon>Brassicales</taxon>
        <taxon>Brassicaceae</taxon>
        <taxon>Camelineae</taxon>
        <taxon>Arabidopsis</taxon>
    </lineage>
</organism>
<feature type="signal peptide" evidence="2">
    <location>
        <begin position="1"/>
        <end position="25"/>
    </location>
</feature>
<feature type="chain" id="PRO_0000379616" description="Defensin-like protein 34">
    <location>
        <begin position="26"/>
        <end position="73"/>
    </location>
</feature>
<feature type="disulfide bond" evidence="1">
    <location>
        <begin position="33"/>
        <end position="59"/>
    </location>
</feature>
<feature type="disulfide bond" evidence="1">
    <location>
        <begin position="45"/>
        <end position="68"/>
    </location>
</feature>
<feature type="disulfide bond" evidence="1">
    <location>
        <begin position="49"/>
        <end position="70"/>
    </location>
</feature>
<dbReference type="EMBL" id="AC010675">
    <property type="status" value="NOT_ANNOTATED_CDS"/>
    <property type="molecule type" value="Genomic_DNA"/>
</dbReference>
<dbReference type="EMBL" id="CP002684">
    <property type="protein sequence ID" value="AEE34979.1"/>
    <property type="molecule type" value="Genomic_DNA"/>
</dbReference>
<dbReference type="RefSeq" id="NP_001031257.1">
    <property type="nucleotide sequence ID" value="NM_001036180.3"/>
</dbReference>
<dbReference type="SMR" id="Q2V4D7"/>
<dbReference type="PaxDb" id="3702-AT1G69818.1"/>
<dbReference type="ProteomicsDB" id="224670"/>
<dbReference type="EnsemblPlants" id="AT1G69818.1">
    <property type="protein sequence ID" value="AT1G69818.1"/>
    <property type="gene ID" value="AT1G69818"/>
</dbReference>
<dbReference type="GeneID" id="3767679"/>
<dbReference type="Gramene" id="AT1G69818.1">
    <property type="protein sequence ID" value="AT1G69818.1"/>
    <property type="gene ID" value="AT1G69818"/>
</dbReference>
<dbReference type="KEGG" id="ath:AT1G69818"/>
<dbReference type="Araport" id="AT1G69818"/>
<dbReference type="TAIR" id="AT1G69818"/>
<dbReference type="HOGENOM" id="CLU_2725643_0_0_1"/>
<dbReference type="InParanoid" id="Q2V4D7"/>
<dbReference type="PhylomeDB" id="Q2V4D7"/>
<dbReference type="PRO" id="PR:Q2V4D7"/>
<dbReference type="Proteomes" id="UP000006548">
    <property type="component" value="Chromosome 1"/>
</dbReference>
<dbReference type="ExpressionAtlas" id="Q2V4D7">
    <property type="expression patterns" value="baseline"/>
</dbReference>
<dbReference type="GO" id="GO:0005576">
    <property type="term" value="C:extracellular region"/>
    <property type="evidence" value="ECO:0007669"/>
    <property type="project" value="UniProtKB-SubCell"/>
</dbReference>
<dbReference type="GO" id="GO:0050832">
    <property type="term" value="P:defense response to fungus"/>
    <property type="evidence" value="ECO:0007669"/>
    <property type="project" value="UniProtKB-KW"/>
</dbReference>
<dbReference type="GO" id="GO:0031640">
    <property type="term" value="P:killing of cells of another organism"/>
    <property type="evidence" value="ECO:0007669"/>
    <property type="project" value="UniProtKB-KW"/>
</dbReference>
<reference key="1">
    <citation type="journal article" date="2000" name="Nature">
        <title>Sequence and analysis of chromosome 1 of the plant Arabidopsis thaliana.</title>
        <authorList>
            <person name="Theologis A."/>
            <person name="Ecker J.R."/>
            <person name="Palm C.J."/>
            <person name="Federspiel N.A."/>
            <person name="Kaul S."/>
            <person name="White O."/>
            <person name="Alonso J."/>
            <person name="Altafi H."/>
            <person name="Araujo R."/>
            <person name="Bowman C.L."/>
            <person name="Brooks S.Y."/>
            <person name="Buehler E."/>
            <person name="Chan A."/>
            <person name="Chao Q."/>
            <person name="Chen H."/>
            <person name="Cheuk R.F."/>
            <person name="Chin C.W."/>
            <person name="Chung M.K."/>
            <person name="Conn L."/>
            <person name="Conway A.B."/>
            <person name="Conway A.R."/>
            <person name="Creasy T.H."/>
            <person name="Dewar K."/>
            <person name="Dunn P."/>
            <person name="Etgu P."/>
            <person name="Feldblyum T.V."/>
            <person name="Feng J.-D."/>
            <person name="Fong B."/>
            <person name="Fujii C.Y."/>
            <person name="Gill J.E."/>
            <person name="Goldsmith A.D."/>
            <person name="Haas B."/>
            <person name="Hansen N.F."/>
            <person name="Hughes B."/>
            <person name="Huizar L."/>
            <person name="Hunter J.L."/>
            <person name="Jenkins J."/>
            <person name="Johnson-Hopson C."/>
            <person name="Khan S."/>
            <person name="Khaykin E."/>
            <person name="Kim C.J."/>
            <person name="Koo H.L."/>
            <person name="Kremenetskaia I."/>
            <person name="Kurtz D.B."/>
            <person name="Kwan A."/>
            <person name="Lam B."/>
            <person name="Langin-Hooper S."/>
            <person name="Lee A."/>
            <person name="Lee J.M."/>
            <person name="Lenz C.A."/>
            <person name="Li J.H."/>
            <person name="Li Y.-P."/>
            <person name="Lin X."/>
            <person name="Liu S.X."/>
            <person name="Liu Z.A."/>
            <person name="Luros J.S."/>
            <person name="Maiti R."/>
            <person name="Marziali A."/>
            <person name="Militscher J."/>
            <person name="Miranda M."/>
            <person name="Nguyen M."/>
            <person name="Nierman W.C."/>
            <person name="Osborne B.I."/>
            <person name="Pai G."/>
            <person name="Peterson J."/>
            <person name="Pham P.K."/>
            <person name="Rizzo M."/>
            <person name="Rooney T."/>
            <person name="Rowley D."/>
            <person name="Sakano H."/>
            <person name="Salzberg S.L."/>
            <person name="Schwartz J.R."/>
            <person name="Shinn P."/>
            <person name="Southwick A.M."/>
            <person name="Sun H."/>
            <person name="Tallon L.J."/>
            <person name="Tambunga G."/>
            <person name="Toriumi M.J."/>
            <person name="Town C.D."/>
            <person name="Utterback T."/>
            <person name="Van Aken S."/>
            <person name="Vaysberg M."/>
            <person name="Vysotskaia V.S."/>
            <person name="Walker M."/>
            <person name="Wu D."/>
            <person name="Yu G."/>
            <person name="Fraser C.M."/>
            <person name="Venter J.C."/>
            <person name="Davis R.W."/>
        </authorList>
    </citation>
    <scope>NUCLEOTIDE SEQUENCE [LARGE SCALE GENOMIC DNA]</scope>
    <source>
        <strain>cv. Columbia</strain>
    </source>
</reference>
<reference key="2">
    <citation type="journal article" date="2017" name="Plant J.">
        <title>Araport11: a complete reannotation of the Arabidopsis thaliana reference genome.</title>
        <authorList>
            <person name="Cheng C.Y."/>
            <person name="Krishnakumar V."/>
            <person name="Chan A.P."/>
            <person name="Thibaud-Nissen F."/>
            <person name="Schobel S."/>
            <person name="Town C.D."/>
        </authorList>
    </citation>
    <scope>GENOME REANNOTATION</scope>
    <source>
        <strain>cv. Columbia</strain>
    </source>
</reference>
<reference key="3">
    <citation type="journal article" date="2005" name="Plant Physiol.">
        <title>Genome organization of more than 300 defensin-like genes in Arabidopsis.</title>
        <authorList>
            <person name="Silverstein K.A.T."/>
            <person name="Graham M.A."/>
            <person name="Paape T.D."/>
            <person name="VandenBosch K.A."/>
        </authorList>
    </citation>
    <scope>GENE FAMILY</scope>
</reference>
<name>DEF34_ARATH</name>
<evidence type="ECO:0000250" key="1"/>
<evidence type="ECO:0000255" key="2"/>
<evidence type="ECO:0000305" key="3"/>
<comment type="subcellular location">
    <subcellularLocation>
        <location evidence="1">Secreted</location>
    </subcellularLocation>
</comment>
<comment type="similarity">
    <text evidence="3">Belongs to the DEFL family.</text>
</comment>
<comment type="caution">
    <text evidence="3">Lacks 1 of the 4 disulfide bonds, which are conserved features of the family.</text>
</comment>
<sequence>MASNKVSFFLVLCLCVLSTAEFGEAQILTGIKCPDPNGHDKEDKCNIYCLNQNYMGGSCQGYKNHYMCECYVG</sequence>
<protein>
    <recommendedName>
        <fullName>Defensin-like protein 34</fullName>
    </recommendedName>
</protein>
<proteinExistence type="evidence at transcript level"/>
<keyword id="KW-0929">Antimicrobial</keyword>
<keyword id="KW-1015">Disulfide bond</keyword>
<keyword id="KW-0295">Fungicide</keyword>
<keyword id="KW-0611">Plant defense</keyword>
<keyword id="KW-1185">Reference proteome</keyword>
<keyword id="KW-0964">Secreted</keyword>
<keyword id="KW-0732">Signal</keyword>
<gene>
    <name type="ordered locus">At1g69818</name>
    <name type="ORF">T17F3</name>
</gene>